<feature type="chain" id="PRO_0000161115" description="Elongation factor Ts">
    <location>
        <begin position="1"/>
        <end position="196"/>
    </location>
</feature>
<feature type="region of interest" description="Involved in Mg(2+) ion dislocation from EF-Tu" evidence="1">
    <location>
        <begin position="80"/>
        <end position="83"/>
    </location>
</feature>
<name>EFTS_DESPS</name>
<sequence length="196" mass="21435">MAITSKMVKELRDKTAAGMMDCKKALTETDGDMEKAVDLLRQKGLAVAAKRAGRATSEGTIQTYIHGAKIGVMIEVGCETDFVAKNEEFCKFAKDIAMHIAAVNPIAVSREGIPAEVIEREKAIYVQQALDSGKPEAIVEKMVVGKVEKFIGEICLVEQKFVMNPDLTVQDLLNELVAKMGENISIKRFARFQVGA</sequence>
<accession>Q6AP40</accession>
<keyword id="KW-0963">Cytoplasm</keyword>
<keyword id="KW-0251">Elongation factor</keyword>
<keyword id="KW-0648">Protein biosynthesis</keyword>
<keyword id="KW-1185">Reference proteome</keyword>
<comment type="function">
    <text evidence="1">Associates with the EF-Tu.GDP complex and induces the exchange of GDP to GTP. It remains bound to the aminoacyl-tRNA.EF-Tu.GTP complex up to the GTP hydrolysis stage on the ribosome.</text>
</comment>
<comment type="subcellular location">
    <subcellularLocation>
        <location evidence="1">Cytoplasm</location>
    </subcellularLocation>
</comment>
<comment type="similarity">
    <text evidence="1">Belongs to the EF-Ts family.</text>
</comment>
<reference key="1">
    <citation type="journal article" date="2004" name="Environ. Microbiol.">
        <title>The genome of Desulfotalea psychrophila, a sulfate-reducing bacterium from permanently cold Arctic sediments.</title>
        <authorList>
            <person name="Rabus R."/>
            <person name="Ruepp A."/>
            <person name="Frickey T."/>
            <person name="Rattei T."/>
            <person name="Fartmann B."/>
            <person name="Stark M."/>
            <person name="Bauer M."/>
            <person name="Zibat A."/>
            <person name="Lombardot T."/>
            <person name="Becker I."/>
            <person name="Amann J."/>
            <person name="Gellner K."/>
            <person name="Teeling H."/>
            <person name="Leuschner W.D."/>
            <person name="Gloeckner F.-O."/>
            <person name="Lupas A.N."/>
            <person name="Amann R."/>
            <person name="Klenk H.-P."/>
        </authorList>
    </citation>
    <scope>NUCLEOTIDE SEQUENCE [LARGE SCALE GENOMIC DNA]</scope>
    <source>
        <strain>DSM 12343 / LSv54</strain>
    </source>
</reference>
<organism>
    <name type="scientific">Desulfotalea psychrophila (strain LSv54 / DSM 12343)</name>
    <dbReference type="NCBI Taxonomy" id="177439"/>
    <lineage>
        <taxon>Bacteria</taxon>
        <taxon>Pseudomonadati</taxon>
        <taxon>Thermodesulfobacteriota</taxon>
        <taxon>Desulfobulbia</taxon>
        <taxon>Desulfobulbales</taxon>
        <taxon>Desulfocapsaceae</taxon>
        <taxon>Desulfotalea</taxon>
    </lineage>
</organism>
<dbReference type="EMBL" id="CR522870">
    <property type="protein sequence ID" value="CAG35884.1"/>
    <property type="molecule type" value="Genomic_DNA"/>
</dbReference>
<dbReference type="RefSeq" id="WP_011188396.1">
    <property type="nucleotide sequence ID" value="NC_006138.1"/>
</dbReference>
<dbReference type="SMR" id="Q6AP40"/>
<dbReference type="STRING" id="177439.DP1155"/>
<dbReference type="KEGG" id="dps:DP1155"/>
<dbReference type="eggNOG" id="COG0264">
    <property type="taxonomic scope" value="Bacteria"/>
</dbReference>
<dbReference type="HOGENOM" id="CLU_047155_1_1_7"/>
<dbReference type="OrthoDB" id="9808348at2"/>
<dbReference type="Proteomes" id="UP000000602">
    <property type="component" value="Chromosome"/>
</dbReference>
<dbReference type="GO" id="GO:0005737">
    <property type="term" value="C:cytoplasm"/>
    <property type="evidence" value="ECO:0007669"/>
    <property type="project" value="UniProtKB-SubCell"/>
</dbReference>
<dbReference type="GO" id="GO:0003746">
    <property type="term" value="F:translation elongation factor activity"/>
    <property type="evidence" value="ECO:0007669"/>
    <property type="project" value="UniProtKB-UniRule"/>
</dbReference>
<dbReference type="CDD" id="cd14275">
    <property type="entry name" value="UBA_EF-Ts"/>
    <property type="match status" value="1"/>
</dbReference>
<dbReference type="FunFam" id="1.10.286.20:FF:000001">
    <property type="entry name" value="Elongation factor Ts"/>
    <property type="match status" value="1"/>
</dbReference>
<dbReference type="FunFam" id="1.10.8.10:FF:000001">
    <property type="entry name" value="Elongation factor Ts"/>
    <property type="match status" value="1"/>
</dbReference>
<dbReference type="Gene3D" id="1.10.286.20">
    <property type="match status" value="1"/>
</dbReference>
<dbReference type="Gene3D" id="1.10.8.10">
    <property type="entry name" value="DNA helicase RuvA subunit, C-terminal domain"/>
    <property type="match status" value="1"/>
</dbReference>
<dbReference type="Gene3D" id="3.30.479.20">
    <property type="entry name" value="Elongation factor Ts, dimerisation domain"/>
    <property type="match status" value="1"/>
</dbReference>
<dbReference type="HAMAP" id="MF_00050">
    <property type="entry name" value="EF_Ts"/>
    <property type="match status" value="1"/>
</dbReference>
<dbReference type="InterPro" id="IPR036402">
    <property type="entry name" value="EF-Ts_dimer_sf"/>
</dbReference>
<dbReference type="InterPro" id="IPR001816">
    <property type="entry name" value="Transl_elong_EFTs/EF1B"/>
</dbReference>
<dbReference type="InterPro" id="IPR014039">
    <property type="entry name" value="Transl_elong_EFTs/EF1B_dimer"/>
</dbReference>
<dbReference type="InterPro" id="IPR018101">
    <property type="entry name" value="Transl_elong_Ts_CS"/>
</dbReference>
<dbReference type="InterPro" id="IPR009060">
    <property type="entry name" value="UBA-like_sf"/>
</dbReference>
<dbReference type="NCBIfam" id="TIGR00116">
    <property type="entry name" value="tsf"/>
    <property type="match status" value="2"/>
</dbReference>
<dbReference type="PANTHER" id="PTHR11741">
    <property type="entry name" value="ELONGATION FACTOR TS"/>
    <property type="match status" value="1"/>
</dbReference>
<dbReference type="PANTHER" id="PTHR11741:SF0">
    <property type="entry name" value="ELONGATION FACTOR TS, MITOCHONDRIAL"/>
    <property type="match status" value="1"/>
</dbReference>
<dbReference type="Pfam" id="PF00889">
    <property type="entry name" value="EF_TS"/>
    <property type="match status" value="1"/>
</dbReference>
<dbReference type="SUPFAM" id="SSF54713">
    <property type="entry name" value="Elongation factor Ts (EF-Ts), dimerisation domain"/>
    <property type="match status" value="1"/>
</dbReference>
<dbReference type="SUPFAM" id="SSF46934">
    <property type="entry name" value="UBA-like"/>
    <property type="match status" value="1"/>
</dbReference>
<dbReference type="PROSITE" id="PS01127">
    <property type="entry name" value="EF_TS_2"/>
    <property type="match status" value="1"/>
</dbReference>
<proteinExistence type="inferred from homology"/>
<protein>
    <recommendedName>
        <fullName evidence="1">Elongation factor Ts</fullName>
        <shortName evidence="1">EF-Ts</shortName>
    </recommendedName>
</protein>
<evidence type="ECO:0000255" key="1">
    <source>
        <dbReference type="HAMAP-Rule" id="MF_00050"/>
    </source>
</evidence>
<gene>
    <name evidence="1" type="primary">tsf</name>
    <name type="ordered locus">DP1155</name>
</gene>